<accession>A6TE38</accession>
<evidence type="ECO:0000255" key="1">
    <source>
        <dbReference type="HAMAP-Rule" id="MF_01043"/>
    </source>
</evidence>
<feature type="chain" id="PRO_1000064186" description="Glycerol-3-phosphate acyltransferase">
    <location>
        <begin position="1"/>
        <end position="205"/>
    </location>
</feature>
<feature type="transmembrane region" description="Helical" evidence="1">
    <location>
        <begin position="4"/>
        <end position="24"/>
    </location>
</feature>
<feature type="transmembrane region" description="Helical" evidence="1">
    <location>
        <begin position="80"/>
        <end position="100"/>
    </location>
</feature>
<feature type="transmembrane region" description="Helical" evidence="1">
    <location>
        <begin position="107"/>
        <end position="127"/>
    </location>
</feature>
<feature type="transmembrane region" description="Helical" evidence="1">
    <location>
        <begin position="130"/>
        <end position="150"/>
    </location>
</feature>
<feature type="transmembrane region" description="Helical" evidence="1">
    <location>
        <begin position="155"/>
        <end position="175"/>
    </location>
</feature>
<proteinExistence type="inferred from homology"/>
<dbReference type="EC" id="2.3.1.275" evidence="1"/>
<dbReference type="EMBL" id="CP000647">
    <property type="protein sequence ID" value="ABR78859.1"/>
    <property type="molecule type" value="Genomic_DNA"/>
</dbReference>
<dbReference type="RefSeq" id="WP_015958998.1">
    <property type="nucleotide sequence ID" value="NC_009648.1"/>
</dbReference>
<dbReference type="SMR" id="A6TE38"/>
<dbReference type="STRING" id="272620.KPN_03463"/>
<dbReference type="PaxDb" id="272620-KPN_03463"/>
<dbReference type="EnsemblBacteria" id="ABR78859">
    <property type="protein sequence ID" value="ABR78859"/>
    <property type="gene ID" value="KPN_03463"/>
</dbReference>
<dbReference type="KEGG" id="kpn:KPN_03463"/>
<dbReference type="HOGENOM" id="CLU_081254_0_2_6"/>
<dbReference type="UniPathway" id="UPA00085"/>
<dbReference type="Proteomes" id="UP000000265">
    <property type="component" value="Chromosome"/>
</dbReference>
<dbReference type="GO" id="GO:0005886">
    <property type="term" value="C:plasma membrane"/>
    <property type="evidence" value="ECO:0007669"/>
    <property type="project" value="UniProtKB-SubCell"/>
</dbReference>
<dbReference type="GO" id="GO:0043772">
    <property type="term" value="F:acyl-phosphate glycerol-3-phosphate acyltransferase activity"/>
    <property type="evidence" value="ECO:0007669"/>
    <property type="project" value="UniProtKB-UniRule"/>
</dbReference>
<dbReference type="GO" id="GO:0008654">
    <property type="term" value="P:phospholipid biosynthetic process"/>
    <property type="evidence" value="ECO:0007669"/>
    <property type="project" value="UniProtKB-UniRule"/>
</dbReference>
<dbReference type="HAMAP" id="MF_01043">
    <property type="entry name" value="PlsY"/>
    <property type="match status" value="1"/>
</dbReference>
<dbReference type="InterPro" id="IPR003811">
    <property type="entry name" value="G3P_acylTferase_PlsY"/>
</dbReference>
<dbReference type="NCBIfam" id="TIGR00023">
    <property type="entry name" value="glycerol-3-phosphate 1-O-acyltransferase PlsY"/>
    <property type="match status" value="1"/>
</dbReference>
<dbReference type="PANTHER" id="PTHR30309:SF0">
    <property type="entry name" value="GLYCEROL-3-PHOSPHATE ACYLTRANSFERASE-RELATED"/>
    <property type="match status" value="1"/>
</dbReference>
<dbReference type="PANTHER" id="PTHR30309">
    <property type="entry name" value="INNER MEMBRANE PROTEIN YGIH"/>
    <property type="match status" value="1"/>
</dbReference>
<dbReference type="Pfam" id="PF02660">
    <property type="entry name" value="G3P_acyltransf"/>
    <property type="match status" value="1"/>
</dbReference>
<dbReference type="SMART" id="SM01207">
    <property type="entry name" value="G3P_acyltransf"/>
    <property type="match status" value="1"/>
</dbReference>
<gene>
    <name evidence="1" type="primary">plsY</name>
    <name type="ordered locus">KPN78578_33980</name>
    <name type="ORF">KPN_03463</name>
</gene>
<keyword id="KW-0997">Cell inner membrane</keyword>
<keyword id="KW-1003">Cell membrane</keyword>
<keyword id="KW-0444">Lipid biosynthesis</keyword>
<keyword id="KW-0443">Lipid metabolism</keyword>
<keyword id="KW-0472">Membrane</keyword>
<keyword id="KW-0594">Phospholipid biosynthesis</keyword>
<keyword id="KW-1208">Phospholipid metabolism</keyword>
<keyword id="KW-0808">Transferase</keyword>
<keyword id="KW-0812">Transmembrane</keyword>
<keyword id="KW-1133">Transmembrane helix</keyword>
<protein>
    <recommendedName>
        <fullName evidence="1">Glycerol-3-phosphate acyltransferase</fullName>
    </recommendedName>
    <alternativeName>
        <fullName evidence="1">Acyl-PO4 G3P acyltransferase</fullName>
    </alternativeName>
    <alternativeName>
        <fullName evidence="1">Acyl-phosphate--glycerol-3-phosphate acyltransferase</fullName>
    </alternativeName>
    <alternativeName>
        <fullName evidence="1">G3P acyltransferase</fullName>
        <shortName evidence="1">GPAT</shortName>
        <ecNumber evidence="1">2.3.1.275</ecNumber>
    </alternativeName>
    <alternativeName>
        <fullName evidence="1">Lysophosphatidic acid synthase</fullName>
        <shortName evidence="1">LPA synthase</shortName>
    </alternativeName>
</protein>
<organism>
    <name type="scientific">Klebsiella pneumoniae subsp. pneumoniae (strain ATCC 700721 / MGH 78578)</name>
    <dbReference type="NCBI Taxonomy" id="272620"/>
    <lineage>
        <taxon>Bacteria</taxon>
        <taxon>Pseudomonadati</taxon>
        <taxon>Pseudomonadota</taxon>
        <taxon>Gammaproteobacteria</taxon>
        <taxon>Enterobacterales</taxon>
        <taxon>Enterobacteriaceae</taxon>
        <taxon>Klebsiella/Raoultella group</taxon>
        <taxon>Klebsiella</taxon>
        <taxon>Klebsiella pneumoniae complex</taxon>
    </lineage>
</organism>
<name>PLSY_KLEP7</name>
<sequence>MSAIAPGLVLLAYLCGSISSAILVCRLAGLPDPRDSGSGNPGATNVLRIGGKGAAVAVLIFDVLKGMLPVWGAWALGLTPFWLGLVAIAACVGHIWPVFFHFRGGKGVATAFGAIAPIGLDLTGVMAGTWLLTILLSGYSSLGAIVSALIAPFYVWWFKPQYTFPVSMLSCLILLRHHDNIQRLWRRQESKIWTREKKKKTPEQK</sequence>
<comment type="function">
    <text evidence="1">Catalyzes the transfer of an acyl group from acyl-phosphate (acyl-PO(4)) to glycerol-3-phosphate (G3P) to form lysophosphatidic acid (LPA). This enzyme utilizes acyl-phosphate as fatty acyl donor, but not acyl-CoA or acyl-ACP.</text>
</comment>
<comment type="catalytic activity">
    <reaction evidence="1">
        <text>an acyl phosphate + sn-glycerol 3-phosphate = a 1-acyl-sn-glycero-3-phosphate + phosphate</text>
        <dbReference type="Rhea" id="RHEA:34075"/>
        <dbReference type="ChEBI" id="CHEBI:43474"/>
        <dbReference type="ChEBI" id="CHEBI:57597"/>
        <dbReference type="ChEBI" id="CHEBI:57970"/>
        <dbReference type="ChEBI" id="CHEBI:59918"/>
        <dbReference type="EC" id="2.3.1.275"/>
    </reaction>
</comment>
<comment type="pathway">
    <text evidence="1">Lipid metabolism; phospholipid metabolism.</text>
</comment>
<comment type="subunit">
    <text evidence="1">Probably interacts with PlsX.</text>
</comment>
<comment type="subcellular location">
    <subcellularLocation>
        <location evidence="1">Cell inner membrane</location>
        <topology evidence="1">Multi-pass membrane protein</topology>
    </subcellularLocation>
</comment>
<comment type="similarity">
    <text evidence="1">Belongs to the PlsY family.</text>
</comment>
<reference key="1">
    <citation type="submission" date="2006-09" db="EMBL/GenBank/DDBJ databases">
        <authorList>
            <consortium name="The Klebsiella pneumonia Genome Sequencing Project"/>
            <person name="McClelland M."/>
            <person name="Sanderson E.K."/>
            <person name="Spieth J."/>
            <person name="Clifton W.S."/>
            <person name="Latreille P."/>
            <person name="Sabo A."/>
            <person name="Pepin K."/>
            <person name="Bhonagiri V."/>
            <person name="Porwollik S."/>
            <person name="Ali J."/>
            <person name="Wilson R.K."/>
        </authorList>
    </citation>
    <scope>NUCLEOTIDE SEQUENCE [LARGE SCALE GENOMIC DNA]</scope>
    <source>
        <strain>ATCC 700721 / MGH 78578</strain>
    </source>
</reference>